<name>SLAA_TRIST</name>
<reference key="1">
    <citation type="submission" date="2001-03" db="EMBL/GenBank/DDBJ databases">
        <title>Cloning and characterization of C-type lectins from Trimeresurus stejnegeri venom.</title>
        <authorList>
            <person name="Lee W.-H."/>
            <person name="Liu H."/>
            <person name="Zhang Y."/>
        </authorList>
    </citation>
    <scope>NUCLEOTIDE SEQUENCE [MRNA]</scope>
    <source>
        <tissue>Venom gland</tissue>
    </source>
</reference>
<keyword id="KW-1015">Disulfide bond</keyword>
<keyword id="KW-1199">Hemostasis impairing toxin</keyword>
<keyword id="KW-0964">Secreted</keyword>
<keyword id="KW-0732">Signal</keyword>
<keyword id="KW-0800">Toxin</keyword>
<proteinExistence type="evidence at transcript level"/>
<organism>
    <name type="scientific">Trimeresurus stejnegeri</name>
    <name type="common">Chinese green tree viper</name>
    <name type="synonym">Viridovipera stejnegeri</name>
    <dbReference type="NCBI Taxonomy" id="39682"/>
    <lineage>
        <taxon>Eukaryota</taxon>
        <taxon>Metazoa</taxon>
        <taxon>Chordata</taxon>
        <taxon>Craniata</taxon>
        <taxon>Vertebrata</taxon>
        <taxon>Euteleostomi</taxon>
        <taxon>Lepidosauria</taxon>
        <taxon>Squamata</taxon>
        <taxon>Bifurcata</taxon>
        <taxon>Unidentata</taxon>
        <taxon>Episquamata</taxon>
        <taxon>Toxicofera</taxon>
        <taxon>Serpentes</taxon>
        <taxon>Colubroidea</taxon>
        <taxon>Viperidae</taxon>
        <taxon>Crotalinae</taxon>
        <taxon>Trimeresurus</taxon>
    </lineage>
</organism>
<sequence>MGRFISVSFGLLVVFLSLSGTGADFDCPSGWSAYDWYCYKPFNEPQTWDDAERFCTEQAKGGHLVSIESSGEADFVGQLVSENIQRPEIYVWIGLRDRRKEQQCSSEWSDGTSIIYVNWNKGESQMCQGLSKWTNFLKWDNTDCQAKNPFVCKFPPQC</sequence>
<dbReference type="EMBL" id="AF354924">
    <property type="protein sequence ID" value="AAQ15166.1"/>
    <property type="molecule type" value="mRNA"/>
</dbReference>
<dbReference type="SMR" id="Q71RQ1"/>
<dbReference type="GO" id="GO:0005576">
    <property type="term" value="C:extracellular region"/>
    <property type="evidence" value="ECO:0007669"/>
    <property type="project" value="UniProtKB-SubCell"/>
</dbReference>
<dbReference type="GO" id="GO:0090729">
    <property type="term" value="F:toxin activity"/>
    <property type="evidence" value="ECO:0007669"/>
    <property type="project" value="UniProtKB-KW"/>
</dbReference>
<dbReference type="FunFam" id="3.10.100.10:FF:000087">
    <property type="entry name" value="Snaclec rhodocetin subunit delta"/>
    <property type="match status" value="1"/>
</dbReference>
<dbReference type="Gene3D" id="3.10.100.10">
    <property type="entry name" value="Mannose-Binding Protein A, subunit A"/>
    <property type="match status" value="1"/>
</dbReference>
<dbReference type="InterPro" id="IPR001304">
    <property type="entry name" value="C-type_lectin-like"/>
</dbReference>
<dbReference type="InterPro" id="IPR016186">
    <property type="entry name" value="C-type_lectin-like/link_sf"/>
</dbReference>
<dbReference type="InterPro" id="IPR050111">
    <property type="entry name" value="C-type_lectin/snaclec_domain"/>
</dbReference>
<dbReference type="InterPro" id="IPR016187">
    <property type="entry name" value="CTDL_fold"/>
</dbReference>
<dbReference type="PANTHER" id="PTHR22803">
    <property type="entry name" value="MANNOSE, PHOSPHOLIPASE, LECTIN RECEPTOR RELATED"/>
    <property type="match status" value="1"/>
</dbReference>
<dbReference type="Pfam" id="PF00059">
    <property type="entry name" value="Lectin_C"/>
    <property type="match status" value="1"/>
</dbReference>
<dbReference type="PRINTS" id="PR01504">
    <property type="entry name" value="PNCREATITSAP"/>
</dbReference>
<dbReference type="SMART" id="SM00034">
    <property type="entry name" value="CLECT"/>
    <property type="match status" value="1"/>
</dbReference>
<dbReference type="SUPFAM" id="SSF56436">
    <property type="entry name" value="C-type lectin-like"/>
    <property type="match status" value="1"/>
</dbReference>
<dbReference type="PROSITE" id="PS50041">
    <property type="entry name" value="C_TYPE_LECTIN_2"/>
    <property type="match status" value="1"/>
</dbReference>
<evidence type="ECO:0000250" key="1"/>
<evidence type="ECO:0000255" key="2">
    <source>
        <dbReference type="PROSITE-ProRule" id="PRU00040"/>
    </source>
</evidence>
<evidence type="ECO:0000305" key="3"/>
<accession>Q71RQ1</accession>
<protein>
    <recommendedName>
        <fullName>Snaclec stejaggregin-A subunit alpha</fullName>
    </recommendedName>
</protein>
<feature type="signal peptide" evidence="1">
    <location>
        <begin position="1"/>
        <end position="23"/>
    </location>
</feature>
<feature type="chain" id="PRO_0000355301" description="Snaclec stejaggregin-A subunit alpha">
    <location>
        <begin position="24"/>
        <end position="158"/>
    </location>
</feature>
<feature type="domain" description="C-type lectin" evidence="2">
    <location>
        <begin position="34"/>
        <end position="153"/>
    </location>
</feature>
<feature type="disulfide bond" evidence="2">
    <location>
        <begin position="27"/>
        <end position="38"/>
    </location>
</feature>
<feature type="disulfide bond" evidence="2">
    <location>
        <begin position="55"/>
        <end position="152"/>
    </location>
</feature>
<feature type="disulfide bond" description="Interchain" evidence="2">
    <location>
        <position position="104"/>
    </location>
</feature>
<feature type="disulfide bond" evidence="2">
    <location>
        <begin position="127"/>
        <end position="144"/>
    </location>
</feature>
<feature type="disulfide bond" description="Interchain" evidence="2">
    <location>
        <position position="158"/>
    </location>
</feature>
<comment type="function">
    <text evidence="1">Interferes with one step of hemostasis (modulation of platelet aggregation, or coagulation cascade, for example).</text>
</comment>
<comment type="subunit">
    <text evidence="1">Heteromultimer; disulfide-linked.</text>
</comment>
<comment type="subcellular location">
    <subcellularLocation>
        <location evidence="1">Secreted</location>
    </subcellularLocation>
</comment>
<comment type="tissue specificity">
    <text>Expressed by the venom gland.</text>
</comment>
<comment type="similarity">
    <text evidence="3">Belongs to the snaclec family.</text>
</comment>